<organism>
    <name type="scientific">Klebsiella pneumoniae subsp. pneumoniae (strain ATCC 700721 / MGH 78578)</name>
    <dbReference type="NCBI Taxonomy" id="272620"/>
    <lineage>
        <taxon>Bacteria</taxon>
        <taxon>Pseudomonadati</taxon>
        <taxon>Pseudomonadota</taxon>
        <taxon>Gammaproteobacteria</taxon>
        <taxon>Enterobacterales</taxon>
        <taxon>Enterobacteriaceae</taxon>
        <taxon>Klebsiella/Raoultella group</taxon>
        <taxon>Klebsiella</taxon>
        <taxon>Klebsiella pneumoniae complex</taxon>
    </lineage>
</organism>
<proteinExistence type="inferred from homology"/>
<accession>A6T572</accession>
<gene>
    <name type="primary">ecpA</name>
    <name type="synonym">matB</name>
    <name type="ordered locus">KPN78578_02820</name>
    <name type="ORF">KPN_00291</name>
</gene>
<protein>
    <recommendedName>
        <fullName>Common pilus major fimbrillin subunit EcpA</fullName>
    </recommendedName>
    <alternativeName>
        <fullName>MatB fimbrillin</fullName>
    </alternativeName>
</protein>
<sequence>MKKKVLAIALVTAFTGMGVAQAADVTAQAVATWSATAKKDTTSKLVVTPLGSLAFQYAEGIKGFNSQKGLFDVAIEGDTTATAFKLTSRLITNTLTQLDTSGSTLSVGVDYNGAAVEKTGDTVMIDTANNIMGGNLSALANGYNASGRTTAQDGFTFSIISGTTNGTTAVTDYSTLPEGIWSGDVSVQFDATWTS</sequence>
<name>ECPA_KLEP7</name>
<dbReference type="EMBL" id="CP000647">
    <property type="protein sequence ID" value="ABR75743.1"/>
    <property type="molecule type" value="Genomic_DNA"/>
</dbReference>
<dbReference type="RefSeq" id="WP_002890053.1">
    <property type="nucleotide sequence ID" value="NC_009648.1"/>
</dbReference>
<dbReference type="SMR" id="A6T572"/>
<dbReference type="STRING" id="272620.KPN_00291"/>
<dbReference type="PaxDb" id="272620-KPN_00291"/>
<dbReference type="EnsemblBacteria" id="ABR75743">
    <property type="protein sequence ID" value="ABR75743"/>
    <property type="gene ID" value="KPN_00291"/>
</dbReference>
<dbReference type="KEGG" id="kpn:KPN_00291"/>
<dbReference type="HOGENOM" id="CLU_120328_0_0_6"/>
<dbReference type="Proteomes" id="UP000000265">
    <property type="component" value="Chromosome"/>
</dbReference>
<dbReference type="GO" id="GO:0009289">
    <property type="term" value="C:pilus"/>
    <property type="evidence" value="ECO:0007669"/>
    <property type="project" value="UniProtKB-SubCell"/>
</dbReference>
<dbReference type="Gene3D" id="2.60.40.3290">
    <property type="entry name" value="Fimbrial protein EcpA"/>
    <property type="match status" value="1"/>
</dbReference>
<dbReference type="InterPro" id="IPR016514">
    <property type="entry name" value="EcpA"/>
</dbReference>
<dbReference type="InterPro" id="IPR038478">
    <property type="entry name" value="Fimbrillin_EcpA_sf"/>
</dbReference>
<dbReference type="Pfam" id="PF16449">
    <property type="entry name" value="MatB"/>
    <property type="match status" value="1"/>
</dbReference>
<dbReference type="PIRSF" id="PIRSF007320">
    <property type="entry name" value="Fimbrillin_MatB"/>
    <property type="match status" value="1"/>
</dbReference>
<reference key="1">
    <citation type="submission" date="2006-09" db="EMBL/GenBank/DDBJ databases">
        <authorList>
            <consortium name="The Klebsiella pneumonia Genome Sequencing Project"/>
            <person name="McClelland M."/>
            <person name="Sanderson E.K."/>
            <person name="Spieth J."/>
            <person name="Clifton W.S."/>
            <person name="Latreille P."/>
            <person name="Sabo A."/>
            <person name="Pepin K."/>
            <person name="Bhonagiri V."/>
            <person name="Porwollik S."/>
            <person name="Ali J."/>
            <person name="Wilson R.K."/>
        </authorList>
    </citation>
    <scope>NUCLEOTIDE SEQUENCE [LARGE SCALE GENOMIC DNA]</scope>
    <source>
        <strain>ATCC 700721 / MGH 78578</strain>
    </source>
</reference>
<comment type="function">
    <text evidence="1">Part of the ecpRABCDE operon, which encodes the E.coli common pilus (ECP). ECP plays a dual role in early-stage biofilm development and host cell recognition. Major subunit of the fimbria (By similarity).</text>
</comment>
<comment type="subunit">
    <text evidence="1">Self-associates. Forms filaments. Interacts with EcpD (By similarity).</text>
</comment>
<comment type="subcellular location">
    <subcellularLocation>
        <location evidence="1">Fimbrium</location>
    </subcellularLocation>
</comment>
<comment type="induction">
    <text evidence="1">Positively regulated by EcpR.</text>
</comment>
<comment type="similarity">
    <text evidence="3">Belongs to the EcpA/MatB fimbrillin family.</text>
</comment>
<keyword id="KW-0281">Fimbrium</keyword>
<keyword id="KW-0732">Signal</keyword>
<feature type="signal peptide" evidence="2">
    <location>
        <begin position="1"/>
        <end position="22"/>
    </location>
</feature>
<feature type="chain" id="PRO_0000367933" description="Common pilus major fimbrillin subunit EcpA">
    <location>
        <begin position="23"/>
        <end position="195"/>
    </location>
</feature>
<evidence type="ECO:0000250" key="1"/>
<evidence type="ECO:0000255" key="2"/>
<evidence type="ECO:0000305" key="3"/>